<comment type="function">
    <text evidence="1">Methylates ribosomal protein L11.</text>
</comment>
<comment type="catalytic activity">
    <reaction evidence="1">
        <text>L-lysyl-[protein] + 3 S-adenosyl-L-methionine = N(6),N(6),N(6)-trimethyl-L-lysyl-[protein] + 3 S-adenosyl-L-homocysteine + 3 H(+)</text>
        <dbReference type="Rhea" id="RHEA:54192"/>
        <dbReference type="Rhea" id="RHEA-COMP:9752"/>
        <dbReference type="Rhea" id="RHEA-COMP:13826"/>
        <dbReference type="ChEBI" id="CHEBI:15378"/>
        <dbReference type="ChEBI" id="CHEBI:29969"/>
        <dbReference type="ChEBI" id="CHEBI:57856"/>
        <dbReference type="ChEBI" id="CHEBI:59789"/>
        <dbReference type="ChEBI" id="CHEBI:61961"/>
    </reaction>
</comment>
<comment type="subcellular location">
    <subcellularLocation>
        <location evidence="1">Cytoplasm</location>
    </subcellularLocation>
</comment>
<comment type="similarity">
    <text evidence="1 2">Belongs to the methyltransferase superfamily. PrmA family.</text>
</comment>
<feature type="chain" id="PRO_0000192239" description="Ribosomal protein L11 methyltransferase">
    <location>
        <begin position="1"/>
        <end position="311"/>
    </location>
</feature>
<feature type="binding site" evidence="1">
    <location>
        <position position="162"/>
    </location>
    <ligand>
        <name>S-adenosyl-L-methionine</name>
        <dbReference type="ChEBI" id="CHEBI:59789"/>
    </ligand>
</feature>
<feature type="binding site" evidence="1">
    <location>
        <position position="183"/>
    </location>
    <ligand>
        <name>S-adenosyl-L-methionine</name>
        <dbReference type="ChEBI" id="CHEBI:59789"/>
    </ligand>
</feature>
<feature type="binding site" evidence="1">
    <location>
        <position position="205"/>
    </location>
    <ligand>
        <name>S-adenosyl-L-methionine</name>
        <dbReference type="ChEBI" id="CHEBI:59789"/>
    </ligand>
</feature>
<feature type="binding site" evidence="1">
    <location>
        <position position="248"/>
    </location>
    <ligand>
        <name>S-adenosyl-L-methionine</name>
        <dbReference type="ChEBI" id="CHEBI:59789"/>
    </ligand>
</feature>
<feature type="sequence conflict" description="In Ref. 1; BAA12466 and 2; BAA12078." evidence="2" ref="1 2">
    <original>L</original>
    <variation>H</variation>
    <location>
        <position position="169"/>
    </location>
</feature>
<feature type="sequence conflict" description="In Ref. 1; BAA12466 and 2; BAA12078." evidence="2" ref="1 2">
    <original>S</original>
    <variation>R</variation>
    <location>
        <position position="263"/>
    </location>
</feature>
<feature type="sequence conflict" description="In Ref. 1; BAA12466 and 2; BAA12078." evidence="2" ref="1 2">
    <original>E</original>
    <variation>V</variation>
    <location>
        <position position="283"/>
    </location>
</feature>
<organism>
    <name type="scientific">Bacillus subtilis (strain 168)</name>
    <dbReference type="NCBI Taxonomy" id="224308"/>
    <lineage>
        <taxon>Bacteria</taxon>
        <taxon>Bacillati</taxon>
        <taxon>Bacillota</taxon>
        <taxon>Bacilli</taxon>
        <taxon>Bacillales</taxon>
        <taxon>Bacillaceae</taxon>
        <taxon>Bacillus</taxon>
    </lineage>
</organism>
<keyword id="KW-0963">Cytoplasm</keyword>
<keyword id="KW-0489">Methyltransferase</keyword>
<keyword id="KW-1185">Reference proteome</keyword>
<keyword id="KW-0949">S-adenosyl-L-methionine</keyword>
<keyword id="KW-0808">Transferase</keyword>
<reference key="1">
    <citation type="journal article" date="1996" name="Microbiology">
        <title>Systematic sequencing of the 283 kb 210 degrees-232 degrees region of the Bacillus subtilis genome containing the skin element and many sporulation genes.</title>
        <authorList>
            <person name="Mizuno M."/>
            <person name="Masuda S."/>
            <person name="Takemaru K."/>
            <person name="Hosono S."/>
            <person name="Sato T."/>
            <person name="Takeuchi M."/>
            <person name="Kobayashi Y."/>
        </authorList>
    </citation>
    <scope>NUCLEOTIDE SEQUENCE [GENOMIC DNA]</scope>
    <source>
        <strain>168 / JH642</strain>
    </source>
</reference>
<reference key="2">
    <citation type="journal article" date="1997" name="J. Bacteriol.">
        <title>The dnaK operon of Bacillus subtilis is heptacistronic.</title>
        <authorList>
            <person name="Homuth G."/>
            <person name="Masuda S."/>
            <person name="Mogk A."/>
            <person name="Kobayashi Y."/>
            <person name="Schumann W."/>
        </authorList>
    </citation>
    <scope>NUCLEOTIDE SEQUENCE [GENOMIC DNA]</scope>
    <source>
        <strain>168 / JH642</strain>
    </source>
</reference>
<reference key="3">
    <citation type="journal article" date="1997" name="Nature">
        <title>The complete genome sequence of the Gram-positive bacterium Bacillus subtilis.</title>
        <authorList>
            <person name="Kunst F."/>
            <person name="Ogasawara N."/>
            <person name="Moszer I."/>
            <person name="Albertini A.M."/>
            <person name="Alloni G."/>
            <person name="Azevedo V."/>
            <person name="Bertero M.G."/>
            <person name="Bessieres P."/>
            <person name="Bolotin A."/>
            <person name="Borchert S."/>
            <person name="Borriss R."/>
            <person name="Boursier L."/>
            <person name="Brans A."/>
            <person name="Braun M."/>
            <person name="Brignell S.C."/>
            <person name="Bron S."/>
            <person name="Brouillet S."/>
            <person name="Bruschi C.V."/>
            <person name="Caldwell B."/>
            <person name="Capuano V."/>
            <person name="Carter N.M."/>
            <person name="Choi S.-K."/>
            <person name="Codani J.-J."/>
            <person name="Connerton I.F."/>
            <person name="Cummings N.J."/>
            <person name="Daniel R.A."/>
            <person name="Denizot F."/>
            <person name="Devine K.M."/>
            <person name="Duesterhoeft A."/>
            <person name="Ehrlich S.D."/>
            <person name="Emmerson P.T."/>
            <person name="Entian K.-D."/>
            <person name="Errington J."/>
            <person name="Fabret C."/>
            <person name="Ferrari E."/>
            <person name="Foulger D."/>
            <person name="Fritz C."/>
            <person name="Fujita M."/>
            <person name="Fujita Y."/>
            <person name="Fuma S."/>
            <person name="Galizzi A."/>
            <person name="Galleron N."/>
            <person name="Ghim S.-Y."/>
            <person name="Glaser P."/>
            <person name="Goffeau A."/>
            <person name="Golightly E.J."/>
            <person name="Grandi G."/>
            <person name="Guiseppi G."/>
            <person name="Guy B.J."/>
            <person name="Haga K."/>
            <person name="Haiech J."/>
            <person name="Harwood C.R."/>
            <person name="Henaut A."/>
            <person name="Hilbert H."/>
            <person name="Holsappel S."/>
            <person name="Hosono S."/>
            <person name="Hullo M.-F."/>
            <person name="Itaya M."/>
            <person name="Jones L.-M."/>
            <person name="Joris B."/>
            <person name="Karamata D."/>
            <person name="Kasahara Y."/>
            <person name="Klaerr-Blanchard M."/>
            <person name="Klein C."/>
            <person name="Kobayashi Y."/>
            <person name="Koetter P."/>
            <person name="Koningstein G."/>
            <person name="Krogh S."/>
            <person name="Kumano M."/>
            <person name="Kurita K."/>
            <person name="Lapidus A."/>
            <person name="Lardinois S."/>
            <person name="Lauber J."/>
            <person name="Lazarevic V."/>
            <person name="Lee S.-M."/>
            <person name="Levine A."/>
            <person name="Liu H."/>
            <person name="Masuda S."/>
            <person name="Mauel C."/>
            <person name="Medigue C."/>
            <person name="Medina N."/>
            <person name="Mellado R.P."/>
            <person name="Mizuno M."/>
            <person name="Moestl D."/>
            <person name="Nakai S."/>
            <person name="Noback M."/>
            <person name="Noone D."/>
            <person name="O'Reilly M."/>
            <person name="Ogawa K."/>
            <person name="Ogiwara A."/>
            <person name="Oudega B."/>
            <person name="Park S.-H."/>
            <person name="Parro V."/>
            <person name="Pohl T.M."/>
            <person name="Portetelle D."/>
            <person name="Porwollik S."/>
            <person name="Prescott A.M."/>
            <person name="Presecan E."/>
            <person name="Pujic P."/>
            <person name="Purnelle B."/>
            <person name="Rapoport G."/>
            <person name="Rey M."/>
            <person name="Reynolds S."/>
            <person name="Rieger M."/>
            <person name="Rivolta C."/>
            <person name="Rocha E."/>
            <person name="Roche B."/>
            <person name="Rose M."/>
            <person name="Sadaie Y."/>
            <person name="Sato T."/>
            <person name="Scanlan E."/>
            <person name="Schleich S."/>
            <person name="Schroeter R."/>
            <person name="Scoffone F."/>
            <person name="Sekiguchi J."/>
            <person name="Sekowska A."/>
            <person name="Seror S.J."/>
            <person name="Serror P."/>
            <person name="Shin B.-S."/>
            <person name="Soldo B."/>
            <person name="Sorokin A."/>
            <person name="Tacconi E."/>
            <person name="Takagi T."/>
            <person name="Takahashi H."/>
            <person name="Takemaru K."/>
            <person name="Takeuchi M."/>
            <person name="Tamakoshi A."/>
            <person name="Tanaka T."/>
            <person name="Terpstra P."/>
            <person name="Tognoni A."/>
            <person name="Tosato V."/>
            <person name="Uchiyama S."/>
            <person name="Vandenbol M."/>
            <person name="Vannier F."/>
            <person name="Vassarotti A."/>
            <person name="Viari A."/>
            <person name="Wambutt R."/>
            <person name="Wedler E."/>
            <person name="Wedler H."/>
            <person name="Weitzenegger T."/>
            <person name="Winters P."/>
            <person name="Wipat A."/>
            <person name="Yamamoto H."/>
            <person name="Yamane K."/>
            <person name="Yasumoto K."/>
            <person name="Yata K."/>
            <person name="Yoshida K."/>
            <person name="Yoshikawa H.-F."/>
            <person name="Zumstein E."/>
            <person name="Yoshikawa H."/>
            <person name="Danchin A."/>
        </authorList>
    </citation>
    <scope>NUCLEOTIDE SEQUENCE [LARGE SCALE GENOMIC DNA]</scope>
    <source>
        <strain>168</strain>
    </source>
</reference>
<reference key="4">
    <citation type="journal article" date="2009" name="Microbiology">
        <title>From a consortium sequence to a unified sequence: the Bacillus subtilis 168 reference genome a decade later.</title>
        <authorList>
            <person name="Barbe V."/>
            <person name="Cruveiller S."/>
            <person name="Kunst F."/>
            <person name="Lenoble P."/>
            <person name="Meurice G."/>
            <person name="Sekowska A."/>
            <person name="Vallenet D."/>
            <person name="Wang T."/>
            <person name="Moszer I."/>
            <person name="Medigue C."/>
            <person name="Danchin A."/>
        </authorList>
    </citation>
    <scope>SEQUENCE REVISION TO 169; 263 AND 283</scope>
</reference>
<accession>P54460</accession>
<protein>
    <recommendedName>
        <fullName evidence="1">Ribosomal protein L11 methyltransferase</fullName>
        <shortName evidence="1">L11 Mtase</shortName>
        <ecNumber evidence="1">2.1.1.-</ecNumber>
    </recommendedName>
</protein>
<proteinExistence type="inferred from homology"/>
<sequence>MKWSELSIHTTHEAVEPISNILHEAGASGVVIEDPLDLIKERENVYGEIYQLDPNDYPDEGVIVKAYLPVNSFLGETVDGIKETINNLLLYNIDLGRNHITISEVNEEEWATAWKKYYHPVKISEKFTIVPTWEEYTPVHTDELIIEMDPGMAFGTGTHPTTVLCIQALERFVQKGDKVIDVGTGSGILSIAAAMLEAESVHAYDLDPVAVESARLNLKLNKVSDIAQVKQNNLLDGIEGEHDVIVANILAEVILRFTSQAYSLLKEGGHFITSGIIGHKKQEVKEALEQAGFTIVEILSMEDWVSIIAKK</sequence>
<evidence type="ECO:0000255" key="1">
    <source>
        <dbReference type="HAMAP-Rule" id="MF_00735"/>
    </source>
</evidence>
<evidence type="ECO:0000305" key="2"/>
<dbReference type="EC" id="2.1.1.-" evidence="1"/>
<dbReference type="EMBL" id="D84432">
    <property type="protein sequence ID" value="BAA12466.1"/>
    <property type="molecule type" value="Genomic_DNA"/>
</dbReference>
<dbReference type="EMBL" id="D83717">
    <property type="protein sequence ID" value="BAA12078.1"/>
    <property type="molecule type" value="Genomic_DNA"/>
</dbReference>
<dbReference type="EMBL" id="AL009126">
    <property type="protein sequence ID" value="CAB14487.2"/>
    <property type="molecule type" value="Genomic_DNA"/>
</dbReference>
<dbReference type="PIR" id="C69952">
    <property type="entry name" value="C69952"/>
</dbReference>
<dbReference type="RefSeq" id="NP_390423.2">
    <property type="nucleotide sequence ID" value="NC_000964.3"/>
</dbReference>
<dbReference type="RefSeq" id="WP_004398884.1">
    <property type="nucleotide sequence ID" value="NZ_OZ025638.1"/>
</dbReference>
<dbReference type="SMR" id="P54460"/>
<dbReference type="FunCoup" id="P54460">
    <property type="interactions" value="411"/>
</dbReference>
<dbReference type="STRING" id="224308.BSU25450"/>
<dbReference type="jPOST" id="P54460"/>
<dbReference type="PaxDb" id="224308-BSU25450"/>
<dbReference type="EnsemblBacteria" id="CAB14487">
    <property type="protein sequence ID" value="CAB14487"/>
    <property type="gene ID" value="BSU_25450"/>
</dbReference>
<dbReference type="GeneID" id="937847"/>
<dbReference type="KEGG" id="bsu:BSU25450"/>
<dbReference type="PATRIC" id="fig|224308.179.peg.2766"/>
<dbReference type="eggNOG" id="COG2264">
    <property type="taxonomic scope" value="Bacteria"/>
</dbReference>
<dbReference type="InParanoid" id="P54460"/>
<dbReference type="OrthoDB" id="9785995at2"/>
<dbReference type="PhylomeDB" id="P54460"/>
<dbReference type="BioCyc" id="BSUB:BSU25450-MONOMER"/>
<dbReference type="Proteomes" id="UP000001570">
    <property type="component" value="Chromosome"/>
</dbReference>
<dbReference type="GO" id="GO:0005737">
    <property type="term" value="C:cytoplasm"/>
    <property type="evidence" value="ECO:0007669"/>
    <property type="project" value="UniProtKB-SubCell"/>
</dbReference>
<dbReference type="GO" id="GO:0008276">
    <property type="term" value="F:protein methyltransferase activity"/>
    <property type="evidence" value="ECO:0000318"/>
    <property type="project" value="GO_Central"/>
</dbReference>
<dbReference type="GO" id="GO:0016279">
    <property type="term" value="F:protein-lysine N-methyltransferase activity"/>
    <property type="evidence" value="ECO:0007669"/>
    <property type="project" value="RHEA"/>
</dbReference>
<dbReference type="GO" id="GO:0032259">
    <property type="term" value="P:methylation"/>
    <property type="evidence" value="ECO:0007669"/>
    <property type="project" value="UniProtKB-KW"/>
</dbReference>
<dbReference type="CDD" id="cd02440">
    <property type="entry name" value="AdoMet_MTases"/>
    <property type="match status" value="1"/>
</dbReference>
<dbReference type="Gene3D" id="3.40.50.150">
    <property type="entry name" value="Vaccinia Virus protein VP39"/>
    <property type="match status" value="1"/>
</dbReference>
<dbReference type="HAMAP" id="MF_00735">
    <property type="entry name" value="Methyltr_PrmA"/>
    <property type="match status" value="1"/>
</dbReference>
<dbReference type="InterPro" id="IPR050078">
    <property type="entry name" value="Ribosomal_L11_MeTrfase_PrmA"/>
</dbReference>
<dbReference type="InterPro" id="IPR004498">
    <property type="entry name" value="Ribosomal_PrmA_MeTrfase"/>
</dbReference>
<dbReference type="InterPro" id="IPR029063">
    <property type="entry name" value="SAM-dependent_MTases_sf"/>
</dbReference>
<dbReference type="NCBIfam" id="TIGR00406">
    <property type="entry name" value="prmA"/>
    <property type="match status" value="1"/>
</dbReference>
<dbReference type="PANTHER" id="PTHR43648">
    <property type="entry name" value="ELECTRON TRANSFER FLAVOPROTEIN BETA SUBUNIT LYSINE METHYLTRANSFERASE"/>
    <property type="match status" value="1"/>
</dbReference>
<dbReference type="PANTHER" id="PTHR43648:SF1">
    <property type="entry name" value="ELECTRON TRANSFER FLAVOPROTEIN BETA SUBUNIT LYSINE METHYLTRANSFERASE"/>
    <property type="match status" value="1"/>
</dbReference>
<dbReference type="Pfam" id="PF06325">
    <property type="entry name" value="PrmA"/>
    <property type="match status" value="1"/>
</dbReference>
<dbReference type="PIRSF" id="PIRSF000401">
    <property type="entry name" value="RPL11_MTase"/>
    <property type="match status" value="1"/>
</dbReference>
<dbReference type="SUPFAM" id="SSF53335">
    <property type="entry name" value="S-adenosyl-L-methionine-dependent methyltransferases"/>
    <property type="match status" value="1"/>
</dbReference>
<gene>
    <name evidence="1" type="primary">prmA</name>
    <name type="synonym">yqeT</name>
    <name type="ordered locus">BSU25450</name>
</gene>
<name>PRMA_BACSU</name>